<gene>
    <name evidence="1" type="primary">lepA</name>
    <name type="ordered locus">Rmag_0606</name>
</gene>
<dbReference type="EC" id="3.6.5.n1" evidence="1"/>
<dbReference type="EMBL" id="CP000488">
    <property type="protein sequence ID" value="ABL02356.1"/>
    <property type="molecule type" value="Genomic_DNA"/>
</dbReference>
<dbReference type="RefSeq" id="WP_011737981.1">
    <property type="nucleotide sequence ID" value="NC_008610.1"/>
</dbReference>
<dbReference type="SMR" id="A1AWP9"/>
<dbReference type="STRING" id="413404.Rmag_0606"/>
<dbReference type="KEGG" id="rma:Rmag_0606"/>
<dbReference type="eggNOG" id="COG0481">
    <property type="taxonomic scope" value="Bacteria"/>
</dbReference>
<dbReference type="HOGENOM" id="CLU_009995_3_3_6"/>
<dbReference type="OrthoDB" id="9804431at2"/>
<dbReference type="Proteomes" id="UP000002587">
    <property type="component" value="Chromosome"/>
</dbReference>
<dbReference type="GO" id="GO:0005886">
    <property type="term" value="C:plasma membrane"/>
    <property type="evidence" value="ECO:0007669"/>
    <property type="project" value="UniProtKB-SubCell"/>
</dbReference>
<dbReference type="GO" id="GO:0005525">
    <property type="term" value="F:GTP binding"/>
    <property type="evidence" value="ECO:0007669"/>
    <property type="project" value="UniProtKB-UniRule"/>
</dbReference>
<dbReference type="GO" id="GO:0003924">
    <property type="term" value="F:GTPase activity"/>
    <property type="evidence" value="ECO:0007669"/>
    <property type="project" value="UniProtKB-UniRule"/>
</dbReference>
<dbReference type="GO" id="GO:0097216">
    <property type="term" value="F:guanosine tetraphosphate binding"/>
    <property type="evidence" value="ECO:0007669"/>
    <property type="project" value="UniProtKB-ARBA"/>
</dbReference>
<dbReference type="GO" id="GO:0043022">
    <property type="term" value="F:ribosome binding"/>
    <property type="evidence" value="ECO:0007669"/>
    <property type="project" value="UniProtKB-UniRule"/>
</dbReference>
<dbReference type="GO" id="GO:0003746">
    <property type="term" value="F:translation elongation factor activity"/>
    <property type="evidence" value="ECO:0007669"/>
    <property type="project" value="UniProtKB-UniRule"/>
</dbReference>
<dbReference type="GO" id="GO:0045727">
    <property type="term" value="P:positive regulation of translation"/>
    <property type="evidence" value="ECO:0007669"/>
    <property type="project" value="UniProtKB-UniRule"/>
</dbReference>
<dbReference type="CDD" id="cd03699">
    <property type="entry name" value="EF4_II"/>
    <property type="match status" value="1"/>
</dbReference>
<dbReference type="CDD" id="cd16260">
    <property type="entry name" value="EF4_III"/>
    <property type="match status" value="1"/>
</dbReference>
<dbReference type="CDD" id="cd01890">
    <property type="entry name" value="LepA"/>
    <property type="match status" value="1"/>
</dbReference>
<dbReference type="CDD" id="cd03709">
    <property type="entry name" value="lepA_C"/>
    <property type="match status" value="1"/>
</dbReference>
<dbReference type="FunFam" id="3.40.50.300:FF:000078">
    <property type="entry name" value="Elongation factor 4"/>
    <property type="match status" value="1"/>
</dbReference>
<dbReference type="FunFam" id="2.40.30.10:FF:000015">
    <property type="entry name" value="Translation factor GUF1, mitochondrial"/>
    <property type="match status" value="1"/>
</dbReference>
<dbReference type="FunFam" id="3.30.70.240:FF:000007">
    <property type="entry name" value="Translation factor GUF1, mitochondrial"/>
    <property type="match status" value="1"/>
</dbReference>
<dbReference type="FunFam" id="3.30.70.2570:FF:000001">
    <property type="entry name" value="Translation factor GUF1, mitochondrial"/>
    <property type="match status" value="1"/>
</dbReference>
<dbReference type="FunFam" id="3.30.70.870:FF:000004">
    <property type="entry name" value="Translation factor GUF1, mitochondrial"/>
    <property type="match status" value="1"/>
</dbReference>
<dbReference type="Gene3D" id="3.30.70.240">
    <property type="match status" value="1"/>
</dbReference>
<dbReference type="Gene3D" id="3.30.70.2570">
    <property type="entry name" value="Elongation factor 4, C-terminal domain"/>
    <property type="match status" value="1"/>
</dbReference>
<dbReference type="Gene3D" id="3.30.70.870">
    <property type="entry name" value="Elongation Factor G (Translational Gtpase), domain 3"/>
    <property type="match status" value="1"/>
</dbReference>
<dbReference type="Gene3D" id="3.40.50.300">
    <property type="entry name" value="P-loop containing nucleotide triphosphate hydrolases"/>
    <property type="match status" value="1"/>
</dbReference>
<dbReference type="Gene3D" id="2.40.30.10">
    <property type="entry name" value="Translation factors"/>
    <property type="match status" value="1"/>
</dbReference>
<dbReference type="HAMAP" id="MF_00071">
    <property type="entry name" value="LepA"/>
    <property type="match status" value="1"/>
</dbReference>
<dbReference type="InterPro" id="IPR006297">
    <property type="entry name" value="EF-4"/>
</dbReference>
<dbReference type="InterPro" id="IPR035647">
    <property type="entry name" value="EFG_III/V"/>
</dbReference>
<dbReference type="InterPro" id="IPR000640">
    <property type="entry name" value="EFG_V-like"/>
</dbReference>
<dbReference type="InterPro" id="IPR004161">
    <property type="entry name" value="EFTu-like_2"/>
</dbReference>
<dbReference type="InterPro" id="IPR031157">
    <property type="entry name" value="G_TR_CS"/>
</dbReference>
<dbReference type="InterPro" id="IPR038363">
    <property type="entry name" value="LepA_C_sf"/>
</dbReference>
<dbReference type="InterPro" id="IPR013842">
    <property type="entry name" value="LepA_CTD"/>
</dbReference>
<dbReference type="InterPro" id="IPR035654">
    <property type="entry name" value="LepA_IV"/>
</dbReference>
<dbReference type="InterPro" id="IPR027417">
    <property type="entry name" value="P-loop_NTPase"/>
</dbReference>
<dbReference type="InterPro" id="IPR005225">
    <property type="entry name" value="Small_GTP-bd"/>
</dbReference>
<dbReference type="InterPro" id="IPR000795">
    <property type="entry name" value="T_Tr_GTP-bd_dom"/>
</dbReference>
<dbReference type="NCBIfam" id="TIGR01393">
    <property type="entry name" value="lepA"/>
    <property type="match status" value="1"/>
</dbReference>
<dbReference type="NCBIfam" id="TIGR00231">
    <property type="entry name" value="small_GTP"/>
    <property type="match status" value="1"/>
</dbReference>
<dbReference type="PANTHER" id="PTHR43512:SF4">
    <property type="entry name" value="TRANSLATION FACTOR GUF1 HOMOLOG, CHLOROPLASTIC"/>
    <property type="match status" value="1"/>
</dbReference>
<dbReference type="PANTHER" id="PTHR43512">
    <property type="entry name" value="TRANSLATION FACTOR GUF1-RELATED"/>
    <property type="match status" value="1"/>
</dbReference>
<dbReference type="Pfam" id="PF00679">
    <property type="entry name" value="EFG_C"/>
    <property type="match status" value="1"/>
</dbReference>
<dbReference type="Pfam" id="PF00009">
    <property type="entry name" value="GTP_EFTU"/>
    <property type="match status" value="1"/>
</dbReference>
<dbReference type="Pfam" id="PF03144">
    <property type="entry name" value="GTP_EFTU_D2"/>
    <property type="match status" value="1"/>
</dbReference>
<dbReference type="Pfam" id="PF06421">
    <property type="entry name" value="LepA_C"/>
    <property type="match status" value="1"/>
</dbReference>
<dbReference type="PRINTS" id="PR00315">
    <property type="entry name" value="ELONGATNFCT"/>
</dbReference>
<dbReference type="SUPFAM" id="SSF54980">
    <property type="entry name" value="EF-G C-terminal domain-like"/>
    <property type="match status" value="2"/>
</dbReference>
<dbReference type="SUPFAM" id="SSF52540">
    <property type="entry name" value="P-loop containing nucleoside triphosphate hydrolases"/>
    <property type="match status" value="1"/>
</dbReference>
<dbReference type="PROSITE" id="PS00301">
    <property type="entry name" value="G_TR_1"/>
    <property type="match status" value="1"/>
</dbReference>
<dbReference type="PROSITE" id="PS51722">
    <property type="entry name" value="G_TR_2"/>
    <property type="match status" value="1"/>
</dbReference>
<comment type="function">
    <text evidence="1">Required for accurate and efficient protein synthesis under certain stress conditions. May act as a fidelity factor of the translation reaction, by catalyzing a one-codon backward translocation of tRNAs on improperly translocated ribosomes. Back-translocation proceeds from a post-translocation (POST) complex to a pre-translocation (PRE) complex, thus giving elongation factor G a second chance to translocate the tRNAs correctly. Binds to ribosomes in a GTP-dependent manner.</text>
</comment>
<comment type="catalytic activity">
    <reaction evidence="1">
        <text>GTP + H2O = GDP + phosphate + H(+)</text>
        <dbReference type="Rhea" id="RHEA:19669"/>
        <dbReference type="ChEBI" id="CHEBI:15377"/>
        <dbReference type="ChEBI" id="CHEBI:15378"/>
        <dbReference type="ChEBI" id="CHEBI:37565"/>
        <dbReference type="ChEBI" id="CHEBI:43474"/>
        <dbReference type="ChEBI" id="CHEBI:58189"/>
        <dbReference type="EC" id="3.6.5.n1"/>
    </reaction>
</comment>
<comment type="subcellular location">
    <subcellularLocation>
        <location evidence="1">Cell inner membrane</location>
        <topology evidence="1">Peripheral membrane protein</topology>
        <orientation evidence="1">Cytoplasmic side</orientation>
    </subcellularLocation>
</comment>
<comment type="similarity">
    <text evidence="1">Belongs to the TRAFAC class translation factor GTPase superfamily. Classic translation factor GTPase family. LepA subfamily.</text>
</comment>
<sequence length="595" mass="66499">MKNIRNFSIIAHIDHGKSTIADRFIQFCGGLSDREMSAQVLDSMDIEKERGITIKSQSVTLDYQARNNETYQLNFIDTPGHVDFSYEVSRSLSACEGALLIVDASQGVEAQTIANCYTALDQGLEVVPVLNKIDLPAADPDRVVDEIEDVIGVEAHDAVYASAKSGMGIEDILEQIVEKIPAPKGNIDSPIKALIIDSWFDNYLGVVSLIRVIDGEIRTKTKIKIFSNGKEHLVDEVGVFRPKRKKTNSLKAGEVGFLIASIKNIDGAPVGDTITGAKNSASKPLEGFKPVQPRVFSGIFPISGEDYEKFRDALAKLRLNDAALQYEPENSDALGFGFRIGFLGLLHMEIVQERLEREYNLNLITTAPTVIYEILDTKGVIYRIDSPSKIPINQSIAEFREPIITANILVTDEYVGVIISLCVEKRGVQKNITYMGGQVSLVYELPLNEVVFDFFDRLKSISRGFASMDYRFERYQKSDLIRLDIMINQEPVDVLALIIHRNDSVHKGRELVEKMKKLIPRQMFDVTIQACIGSKIISRSNVKALRKNVTAKCYGGDISRKRKLLDKQKKGKKRMRSVGKVNIPQEVFLAVLHID</sequence>
<name>LEPA_RUTMC</name>
<proteinExistence type="inferred from homology"/>
<keyword id="KW-0997">Cell inner membrane</keyword>
<keyword id="KW-1003">Cell membrane</keyword>
<keyword id="KW-0342">GTP-binding</keyword>
<keyword id="KW-0378">Hydrolase</keyword>
<keyword id="KW-0472">Membrane</keyword>
<keyword id="KW-0547">Nucleotide-binding</keyword>
<keyword id="KW-0648">Protein biosynthesis</keyword>
<accession>A1AWP9</accession>
<protein>
    <recommendedName>
        <fullName evidence="1">Elongation factor 4</fullName>
        <shortName evidence="1">EF-4</shortName>
        <ecNumber evidence="1">3.6.5.n1</ecNumber>
    </recommendedName>
    <alternativeName>
        <fullName evidence="1">Ribosomal back-translocase LepA</fullName>
    </alternativeName>
</protein>
<reference key="1">
    <citation type="journal article" date="2007" name="Science">
        <title>The Calyptogena magnifica chemoautotrophic symbiont genome.</title>
        <authorList>
            <person name="Newton I.L.G."/>
            <person name="Woyke T."/>
            <person name="Auchtung T.A."/>
            <person name="Dilly G.F."/>
            <person name="Dutton R.J."/>
            <person name="Fisher M.C."/>
            <person name="Fontanez K.M."/>
            <person name="Lau E."/>
            <person name="Stewart F.J."/>
            <person name="Richardson P.M."/>
            <person name="Barry K.W."/>
            <person name="Saunders E."/>
            <person name="Detter J.C."/>
            <person name="Wu D."/>
            <person name="Eisen J.A."/>
            <person name="Cavanaugh C.M."/>
        </authorList>
    </citation>
    <scope>NUCLEOTIDE SEQUENCE [LARGE SCALE GENOMIC DNA]</scope>
</reference>
<feature type="chain" id="PRO_1000092437" description="Elongation factor 4">
    <location>
        <begin position="1"/>
        <end position="595"/>
    </location>
</feature>
<feature type="domain" description="tr-type G">
    <location>
        <begin position="2"/>
        <end position="184"/>
    </location>
</feature>
<feature type="binding site" evidence="1">
    <location>
        <begin position="14"/>
        <end position="19"/>
    </location>
    <ligand>
        <name>GTP</name>
        <dbReference type="ChEBI" id="CHEBI:37565"/>
    </ligand>
</feature>
<feature type="binding site" evidence="1">
    <location>
        <begin position="131"/>
        <end position="134"/>
    </location>
    <ligand>
        <name>GTP</name>
        <dbReference type="ChEBI" id="CHEBI:37565"/>
    </ligand>
</feature>
<organism>
    <name type="scientific">Ruthia magnifica subsp. Calyptogena magnifica</name>
    <dbReference type="NCBI Taxonomy" id="413404"/>
    <lineage>
        <taxon>Bacteria</taxon>
        <taxon>Pseudomonadati</taxon>
        <taxon>Pseudomonadota</taxon>
        <taxon>Gammaproteobacteria</taxon>
        <taxon>Candidatus Pseudothioglobaceae</taxon>
        <taxon>Candidatus Ruthturnera</taxon>
    </lineage>
</organism>
<evidence type="ECO:0000255" key="1">
    <source>
        <dbReference type="HAMAP-Rule" id="MF_00071"/>
    </source>
</evidence>